<proteinExistence type="evidence at transcript level"/>
<reference key="1">
    <citation type="journal article" date="2004" name="Proc. Natl. Acad. Sci. U.S.A.">
        <title>The diploid genome sequence of Candida albicans.</title>
        <authorList>
            <person name="Jones T."/>
            <person name="Federspiel N.A."/>
            <person name="Chibana H."/>
            <person name="Dungan J."/>
            <person name="Kalman S."/>
            <person name="Magee B.B."/>
            <person name="Newport G."/>
            <person name="Thorstenson Y.R."/>
            <person name="Agabian N."/>
            <person name="Magee P.T."/>
            <person name="Davis R.W."/>
            <person name="Scherer S."/>
        </authorList>
    </citation>
    <scope>NUCLEOTIDE SEQUENCE [LARGE SCALE GENOMIC DNA]</scope>
    <source>
        <strain>SC5314 / ATCC MYA-2876</strain>
    </source>
</reference>
<reference key="2">
    <citation type="journal article" date="2007" name="Genome Biol.">
        <title>Assembly of the Candida albicans genome into sixteen supercontigs aligned on the eight chromosomes.</title>
        <authorList>
            <person name="van het Hoog M."/>
            <person name="Rast T.J."/>
            <person name="Martchenko M."/>
            <person name="Grindle S."/>
            <person name="Dignard D."/>
            <person name="Hogues H."/>
            <person name="Cuomo C."/>
            <person name="Berriman M."/>
            <person name="Scherer S."/>
            <person name="Magee B.B."/>
            <person name="Whiteway M."/>
            <person name="Chibana H."/>
            <person name="Nantel A."/>
            <person name="Magee P.T."/>
        </authorList>
    </citation>
    <scope>GENOME REANNOTATION</scope>
    <source>
        <strain>SC5314 / ATCC MYA-2876</strain>
    </source>
</reference>
<reference key="3">
    <citation type="journal article" date="2013" name="Genome Biol.">
        <title>Assembly of a phased diploid Candida albicans genome facilitates allele-specific measurements and provides a simple model for repeat and indel structure.</title>
        <authorList>
            <person name="Muzzey D."/>
            <person name="Schwartz K."/>
            <person name="Weissman J.S."/>
            <person name="Sherlock G."/>
        </authorList>
    </citation>
    <scope>NUCLEOTIDE SEQUENCE [LARGE SCALE GENOMIC DNA]</scope>
    <scope>GENOME REANNOTATION</scope>
    <source>
        <strain>SC5314 / ATCC MYA-2876</strain>
    </source>
</reference>
<reference key="4">
    <citation type="journal article" date="2004" name="Proc. Natl. Acad. Sci. U.S.A.">
        <title>Tyrosol is a quorum-sensing molecule in Candida albicans.</title>
        <authorList>
            <person name="Chen H."/>
            <person name="Fujita M."/>
            <person name="Feng Q."/>
            <person name="Clardy J."/>
            <person name="Fink G.R."/>
        </authorList>
    </citation>
    <scope>INDUCTION</scope>
</reference>
<reference key="5">
    <citation type="journal article" date="2007" name="Cell. Microbiol.">
        <title>In vivo transcript profiling of Candida albicans identifies a gene essential for interepithelial dissemination.</title>
        <authorList>
            <person name="Zakikhany K."/>
            <person name="Naglik J.R."/>
            <person name="Schmidt-Westhausen A."/>
            <person name="Holland G."/>
            <person name="Schaller M."/>
            <person name="Hube B."/>
        </authorList>
    </citation>
    <scope>FUNCTION</scope>
    <scope>INDUCTION</scope>
</reference>
<reference key="6">
    <citation type="journal article" date="2010" name="Eukaryot. Cell">
        <title>Adaptations of Candida albicans for growth in the mammalian intestinal tract.</title>
        <authorList>
            <person name="Rosenbach A."/>
            <person name="Dignard D."/>
            <person name="Pierce J.V."/>
            <person name="Whiteway M."/>
            <person name="Kumamoto C.A."/>
        </authorList>
    </citation>
    <scope>INDUCTION</scope>
</reference>
<reference key="7">
    <citation type="journal article" date="2011" name="PLoS ONE">
        <title>From attachment to damage: defined genes of Candida albicans mediate adhesion, invasion and damage during interaction with oral epithelial cells.</title>
        <authorList>
            <person name="Wachtler B."/>
            <person name="Wilson D."/>
            <person name="Haedicke K."/>
            <person name="Dalle F."/>
            <person name="Hube B."/>
        </authorList>
    </citation>
    <scope>FUNCTION</scope>
</reference>
<reference key="8">
    <citation type="journal article" date="2011" name="PLoS ONE">
        <title>The Candida albicans-specific gene EED1 encodes a key regulator of hyphal extension.</title>
        <authorList>
            <person name="Martin R."/>
            <person name="Moran G.P."/>
            <person name="Jacobsen I.D."/>
            <person name="Heyken A."/>
            <person name="Domey J."/>
            <person name="Sullivan D.J."/>
            <person name="Kurzai O."/>
            <person name="Hube B."/>
        </authorList>
    </citation>
    <scope>FUNCTION</scope>
    <scope>DISRUPTION PHENOTYPE</scope>
    <scope>INDUCTION</scope>
</reference>
<reference key="9">
    <citation type="journal article" date="2013" name="Med. Mycol.">
        <title>The inhibitory activity of linalool against the filamentous growth and biofilm formation in Candida albicans.</title>
        <authorList>
            <person name="Hsu C.C."/>
            <person name="Lai W.L."/>
            <person name="Chuang K.C."/>
            <person name="Lee M.H."/>
            <person name="Tsai Y.C."/>
        </authorList>
    </citation>
    <scope>INDUCTION</scope>
</reference>
<sequence length="887" mass="99555">MERRQFNTSNIRNGTGRPRKTPRSKLYMVYPPLSGEDSTNPEPEEGSSQENNPTEPSSSQSNSVQNQDQSEDQSQLPQQESNTQQESNTQQESNTPSPRASNTSTETPAPLSPIQPGIRNIPSGLLLPQEKVGRLMGYPFYRDFNFTLNPERYQKLIYVFQILKNAARNHRNGASLLRKYFSLARRSKRTTDMFVTTIEEMRKRSLENSRKRELEEAQEREESNKRQHTESSAEPNAESSTESTTESNAESGAEPNAEPSAESTTESNVESGAEPNAESGAESGAEPTAESNAELKQRIWEILSYRLEQSNNETNNTGESNSTSQQPRQLPNNELIMNIRVLQKNTHAKPVLGRIKFTPDKSNKTSLTGSQNKVHSTNTQQSQKHPQQILTNSETHKPQQYSAQSQQQMVHQTNSHEPSQKRSPPPQQQQQKQPSVPTSSVPLQVSQKQNQQQQELPLPPQPQPQQRTAPSAVKQQQSMQMQPPPQQQQQQQRHQPLQQSPPTMPLQQQPVPPVQQVQTVPPPSSQPQTQLSQQQQQQQQAQLQMQVPRCYQYQNRPPSQQRQYSQTPQYNQPPPQQKVYALPPQQVYAPPPRQVYAQPTIACKQQYPQQLYEQAPQEGSSYQHHYQQVQQRQNQQPYMQSAPTYQQPHVQTPKSTRSNKQEKQRLPKGQEQVPKATRTMFEAFTGSNIAVEKLRQRTLDNGREPERLRTEYVNVLSSPERAAEKSTSRSKQSSNQKPVVKQQSSFPPPIKHQQTQEQQGNILPPVSQLLAIQSSTVTSRGSNASGAVMGSGNTQRVASRSFTNTFVAEAVVNNANNRGGPVPPTGPETNTRGGRASTRSSGRPRGNRSTQRAEGNVTGRVARSTDGSQSQNSGKASKISNIRNLLN</sequence>
<gene>
    <name type="primary">DEF1</name>
    <name type="synonym">EDT1</name>
    <name type="synonym">EED1</name>
    <name type="ordered locus">CAALFM_CR09880WA</name>
    <name type="ORF">CaO19.7561</name>
</gene>
<name>EED1_CANAL</name>
<organism>
    <name type="scientific">Candida albicans (strain SC5314 / ATCC MYA-2876)</name>
    <name type="common">Yeast</name>
    <dbReference type="NCBI Taxonomy" id="237561"/>
    <lineage>
        <taxon>Eukaryota</taxon>
        <taxon>Fungi</taxon>
        <taxon>Dikarya</taxon>
        <taxon>Ascomycota</taxon>
        <taxon>Saccharomycotina</taxon>
        <taxon>Pichiomycetes</taxon>
        <taxon>Debaryomycetaceae</taxon>
        <taxon>Candida/Lodderomyces clade</taxon>
        <taxon>Candida</taxon>
    </lineage>
</organism>
<dbReference type="EMBL" id="CP017630">
    <property type="protein sequence ID" value="AOW31643.1"/>
    <property type="molecule type" value="Genomic_DNA"/>
</dbReference>
<dbReference type="RefSeq" id="XP_719323.2">
    <property type="nucleotide sequence ID" value="XM_714230.2"/>
</dbReference>
<dbReference type="SMR" id="G1UB67"/>
<dbReference type="BioGRID" id="1222117">
    <property type="interactions" value="1"/>
</dbReference>
<dbReference type="STRING" id="237561.G1UB67"/>
<dbReference type="EnsemblFungi" id="CR_09880W_A-T">
    <property type="protein sequence ID" value="CR_09880W_A-T-p1"/>
    <property type="gene ID" value="CR_09880W_A"/>
</dbReference>
<dbReference type="GeneID" id="3639023"/>
<dbReference type="KEGG" id="cal:CAALFM_CR09880WA"/>
<dbReference type="CGD" id="CAL0000189505">
    <property type="gene designation" value="DEF1"/>
</dbReference>
<dbReference type="VEuPathDB" id="FungiDB:CR_09880W_A"/>
<dbReference type="HOGENOM" id="CLU_331484_0_0_1"/>
<dbReference type="InParanoid" id="G1UB67"/>
<dbReference type="PHI-base" id="PHI:10233"/>
<dbReference type="PHI-base" id="PHI:123270"/>
<dbReference type="PHI-base" id="PHI:2972"/>
<dbReference type="Proteomes" id="UP000000559">
    <property type="component" value="Chromosome R"/>
</dbReference>
<dbReference type="GO" id="GO:0005634">
    <property type="term" value="C:nucleus"/>
    <property type="evidence" value="ECO:0007669"/>
    <property type="project" value="UniProtKB-SubCell"/>
</dbReference>
<dbReference type="GO" id="GO:0043709">
    <property type="term" value="P:cell adhesion involved in single-species biofilm formation"/>
    <property type="evidence" value="ECO:0000315"/>
    <property type="project" value="CGD"/>
</dbReference>
<dbReference type="GO" id="GO:0044114">
    <property type="term" value="P:development of symbiont in host"/>
    <property type="evidence" value="ECO:0000315"/>
    <property type="project" value="CGD"/>
</dbReference>
<dbReference type="GO" id="GO:0030447">
    <property type="term" value="P:filamentous growth"/>
    <property type="evidence" value="ECO:0000315"/>
    <property type="project" value="CGD"/>
</dbReference>
<dbReference type="GO" id="GO:0044182">
    <property type="term" value="P:filamentous growth of a population of unicellular organisms"/>
    <property type="evidence" value="ECO:0000315"/>
    <property type="project" value="CGD"/>
</dbReference>
<dbReference type="GO" id="GO:1900189">
    <property type="term" value="P:positive regulation of cell adhesion involved in single-species biofilm formation"/>
    <property type="evidence" value="ECO:0000315"/>
    <property type="project" value="CGD"/>
</dbReference>
<dbReference type="GO" id="GO:1900430">
    <property type="term" value="P:positive regulation of filamentous growth of a population of unicellular organisms"/>
    <property type="evidence" value="ECO:0000315"/>
    <property type="project" value="CGD"/>
</dbReference>
<dbReference type="GO" id="GO:0009372">
    <property type="term" value="P:quorum sensing"/>
    <property type="evidence" value="ECO:0000315"/>
    <property type="project" value="CGD"/>
</dbReference>
<dbReference type="GO" id="GO:0044011">
    <property type="term" value="P:single-species biofilm formation on inanimate substrate"/>
    <property type="evidence" value="ECO:0000315"/>
    <property type="project" value="CGD"/>
</dbReference>
<keyword id="KW-0175">Coiled coil</keyword>
<keyword id="KW-0539">Nucleus</keyword>
<keyword id="KW-1185">Reference proteome</keyword>
<keyword id="KW-0804">Transcription</keyword>
<keyword id="KW-0805">Transcription regulation</keyword>
<keyword id="KW-0843">Virulence</keyword>
<feature type="chain" id="PRO_0000424607" description="Transcriptional regulator DEF1">
    <location>
        <begin position="1"/>
        <end position="887"/>
    </location>
</feature>
<feature type="region of interest" description="Disordered" evidence="2">
    <location>
        <begin position="1"/>
        <end position="117"/>
    </location>
</feature>
<feature type="region of interest" description="Disordered" evidence="2">
    <location>
        <begin position="203"/>
        <end position="293"/>
    </location>
</feature>
<feature type="region of interest" description="Disordered" evidence="2">
    <location>
        <begin position="311"/>
        <end position="330"/>
    </location>
</feature>
<feature type="region of interest" description="Disordered" evidence="2">
    <location>
        <begin position="350"/>
        <end position="542"/>
    </location>
</feature>
<feature type="region of interest" description="Disordered" evidence="2">
    <location>
        <begin position="555"/>
        <end position="578"/>
    </location>
</feature>
<feature type="region of interest" description="Disordered" evidence="2">
    <location>
        <begin position="614"/>
        <end position="675"/>
    </location>
</feature>
<feature type="region of interest" description="Disordered" evidence="2">
    <location>
        <begin position="696"/>
        <end position="758"/>
    </location>
</feature>
<feature type="region of interest" description="Disordered" evidence="2">
    <location>
        <begin position="813"/>
        <end position="887"/>
    </location>
</feature>
<feature type="coiled-coil region" evidence="1">
    <location>
        <begin position="199"/>
        <end position="234"/>
    </location>
</feature>
<feature type="compositionally biased region" description="Polar residues" evidence="2">
    <location>
        <begin position="1"/>
        <end position="13"/>
    </location>
</feature>
<feature type="compositionally biased region" description="Low complexity" evidence="2">
    <location>
        <begin position="57"/>
        <end position="75"/>
    </location>
</feature>
<feature type="compositionally biased region" description="Polar residues" evidence="2">
    <location>
        <begin position="76"/>
        <end position="107"/>
    </location>
</feature>
<feature type="compositionally biased region" description="Basic and acidic residues" evidence="2">
    <location>
        <begin position="203"/>
        <end position="231"/>
    </location>
</feature>
<feature type="compositionally biased region" description="Low complexity" evidence="2">
    <location>
        <begin position="232"/>
        <end position="254"/>
    </location>
</feature>
<feature type="compositionally biased region" description="Polar residues" evidence="2">
    <location>
        <begin position="261"/>
        <end position="270"/>
    </location>
</feature>
<feature type="compositionally biased region" description="Low complexity" evidence="2">
    <location>
        <begin position="311"/>
        <end position="326"/>
    </location>
</feature>
<feature type="compositionally biased region" description="Polar residues" evidence="2">
    <location>
        <begin position="364"/>
        <end position="393"/>
    </location>
</feature>
<feature type="compositionally biased region" description="Low complexity" evidence="2">
    <location>
        <begin position="399"/>
        <end position="408"/>
    </location>
</feature>
<feature type="compositionally biased region" description="Low complexity" evidence="2">
    <location>
        <begin position="428"/>
        <end position="456"/>
    </location>
</feature>
<feature type="compositionally biased region" description="Low complexity" evidence="2">
    <location>
        <begin position="475"/>
        <end position="519"/>
    </location>
</feature>
<feature type="compositionally biased region" description="Low complexity" evidence="2">
    <location>
        <begin position="526"/>
        <end position="542"/>
    </location>
</feature>
<feature type="compositionally biased region" description="Low complexity" evidence="2">
    <location>
        <begin position="622"/>
        <end position="640"/>
    </location>
</feature>
<feature type="compositionally biased region" description="Polar residues" evidence="2">
    <location>
        <begin position="641"/>
        <end position="658"/>
    </location>
</feature>
<feature type="compositionally biased region" description="Basic and acidic residues" evidence="2">
    <location>
        <begin position="696"/>
        <end position="710"/>
    </location>
</feature>
<feature type="compositionally biased region" description="Polar residues" evidence="2">
    <location>
        <begin position="729"/>
        <end position="745"/>
    </location>
</feature>
<feature type="compositionally biased region" description="Low complexity" evidence="2">
    <location>
        <begin position="829"/>
        <end position="844"/>
    </location>
</feature>
<feature type="compositionally biased region" description="Polar residues" evidence="2">
    <location>
        <begin position="865"/>
        <end position="887"/>
    </location>
</feature>
<comment type="function">
    <text evidence="4 6 7">Transcriptional regulator involved in extension of germ tubes into elongated hyphae and maintenance of filamentous growth. Regulates expression of UME6. Acts in a pathway that regulates maintenance of hyphal growth by repressing hyphal-to-yeast transition and allows dissemination within host epithelial tissues. Dispensable for invasion into both host oral epithelial cells and enterocytes, but required for epithelial damage.</text>
</comment>
<comment type="subcellular location">
    <subcellularLocation>
        <location evidence="9">Nucleus</location>
    </subcellularLocation>
</comment>
<comment type="induction">
    <text evidence="3 4 5 7 8">Regulated by EFG1, NRG1, and TUP1. Expression is increased with increasing cell density and during host infection. Expression is repressed by linalool.</text>
</comment>
<comment type="disruption phenotype">
    <text evidence="7">Leads to yeast-locked cells.</text>
</comment>
<protein>
    <recommendedName>
        <fullName>Transcriptional regulator DEF1</fullName>
    </recommendedName>
    <alternativeName>
        <fullName>EFG1-dependent transcript protein 1</fullName>
    </alternativeName>
</protein>
<evidence type="ECO:0000255" key="1"/>
<evidence type="ECO:0000256" key="2">
    <source>
        <dbReference type="SAM" id="MobiDB-lite"/>
    </source>
</evidence>
<evidence type="ECO:0000269" key="3">
    <source>
    </source>
</evidence>
<evidence type="ECO:0000269" key="4">
    <source>
    </source>
</evidence>
<evidence type="ECO:0000269" key="5">
    <source>
    </source>
</evidence>
<evidence type="ECO:0000269" key="6">
    <source>
    </source>
</evidence>
<evidence type="ECO:0000269" key="7">
    <source>
    </source>
</evidence>
<evidence type="ECO:0000269" key="8">
    <source>
    </source>
</evidence>
<evidence type="ECO:0000305" key="9"/>
<accession>G1UB67</accession>
<accession>A0A1D8PU29</accession>